<organism>
    <name type="scientific">Xenopus tropicalis</name>
    <name type="common">Western clawed frog</name>
    <name type="synonym">Silurana tropicalis</name>
    <dbReference type="NCBI Taxonomy" id="8364"/>
    <lineage>
        <taxon>Eukaryota</taxon>
        <taxon>Metazoa</taxon>
        <taxon>Chordata</taxon>
        <taxon>Craniata</taxon>
        <taxon>Vertebrata</taxon>
        <taxon>Euteleostomi</taxon>
        <taxon>Amphibia</taxon>
        <taxon>Batrachia</taxon>
        <taxon>Anura</taxon>
        <taxon>Pipoidea</taxon>
        <taxon>Pipidae</taxon>
        <taxon>Xenopodinae</taxon>
        <taxon>Xenopus</taxon>
        <taxon>Silurana</taxon>
    </lineage>
</organism>
<keyword id="KW-0966">Cell projection</keyword>
<keyword id="KW-0256">Endoplasmic reticulum</keyword>
<keyword id="KW-0275">Fatty acid biosynthesis</keyword>
<keyword id="KW-0276">Fatty acid metabolism</keyword>
<keyword id="KW-0444">Lipid biosynthesis</keyword>
<keyword id="KW-0443">Lipid metabolism</keyword>
<keyword id="KW-0472">Membrane</keyword>
<keyword id="KW-1185">Reference proteome</keyword>
<keyword id="KW-0808">Transferase</keyword>
<keyword id="KW-0812">Transmembrane</keyword>
<keyword id="KW-1133">Transmembrane helix</keyword>
<feature type="chain" id="PRO_0000282844" description="Very long chain fatty acid elongase 5">
    <location>
        <begin position="1"/>
        <end position="295"/>
    </location>
</feature>
<feature type="transmembrane region" description="Helical" evidence="3">
    <location>
        <begin position="26"/>
        <end position="46"/>
    </location>
</feature>
<feature type="transmembrane region" description="Helical" evidence="3">
    <location>
        <begin position="64"/>
        <end position="84"/>
    </location>
</feature>
<feature type="transmembrane region" description="Helical" evidence="3">
    <location>
        <begin position="112"/>
        <end position="132"/>
    </location>
</feature>
<feature type="transmembrane region" description="Helical" evidence="3">
    <location>
        <begin position="150"/>
        <end position="170"/>
    </location>
</feature>
<feature type="transmembrane region" description="Helical" evidence="3">
    <location>
        <begin position="175"/>
        <end position="192"/>
    </location>
</feature>
<feature type="transmembrane region" description="Helical" evidence="3">
    <location>
        <begin position="207"/>
        <end position="223"/>
    </location>
</feature>
<feature type="transmembrane region" description="Helical" evidence="3">
    <location>
        <begin position="227"/>
        <end position="247"/>
    </location>
</feature>
<feature type="region of interest" description="Disordered" evidence="4">
    <location>
        <begin position="265"/>
        <end position="295"/>
    </location>
</feature>
<feature type="compositionally biased region" description="Polar residues" evidence="4">
    <location>
        <begin position="266"/>
        <end position="284"/>
    </location>
</feature>
<feature type="compositionally biased region" description="Basic and acidic residues" evidence="4">
    <location>
        <begin position="285"/>
        <end position="295"/>
    </location>
</feature>
<evidence type="ECO:0000250" key="1">
    <source>
        <dbReference type="UniProtKB" id="Q8BHI7"/>
    </source>
</evidence>
<evidence type="ECO:0000250" key="2">
    <source>
        <dbReference type="UniProtKB" id="Q9NYP7"/>
    </source>
</evidence>
<evidence type="ECO:0000255" key="3">
    <source>
        <dbReference type="HAMAP-Rule" id="MF_03205"/>
    </source>
</evidence>
<evidence type="ECO:0000256" key="4">
    <source>
        <dbReference type="SAM" id="MobiDB-lite"/>
    </source>
</evidence>
<dbReference type="EC" id="2.3.1.199" evidence="2 3"/>
<dbReference type="EMBL" id="BC087826">
    <property type="protein sequence ID" value="AAH87826.1"/>
    <property type="molecule type" value="mRNA"/>
</dbReference>
<dbReference type="RefSeq" id="NP_001011248.1">
    <property type="nucleotide sequence ID" value="NM_001011248.1"/>
</dbReference>
<dbReference type="RefSeq" id="XP_017949357.1">
    <property type="nucleotide sequence ID" value="XM_018093868.2"/>
</dbReference>
<dbReference type="SMR" id="Q5M8U1"/>
<dbReference type="FunCoup" id="Q5M8U1">
    <property type="interactions" value="681"/>
</dbReference>
<dbReference type="STRING" id="8364.ENSXETP00000043546"/>
<dbReference type="PaxDb" id="8364-ENSXETP00000034904"/>
<dbReference type="GeneID" id="496694"/>
<dbReference type="KEGG" id="xtr:496694"/>
<dbReference type="AGR" id="Xenbase:XB-GENE-952346"/>
<dbReference type="CTD" id="60481"/>
<dbReference type="Xenbase" id="XB-GENE-952346">
    <property type="gene designation" value="elovl5"/>
</dbReference>
<dbReference type="eggNOG" id="KOG3071">
    <property type="taxonomic scope" value="Eukaryota"/>
</dbReference>
<dbReference type="HOGENOM" id="CLU_048483_0_1_1"/>
<dbReference type="InParanoid" id="Q5M8U1"/>
<dbReference type="OMA" id="CRFPMGW"/>
<dbReference type="OrthoDB" id="434092at2759"/>
<dbReference type="PhylomeDB" id="Q5M8U1"/>
<dbReference type="TreeFam" id="TF323454"/>
<dbReference type="Reactome" id="R-XTR-2046105">
    <property type="pathway name" value="Linoleic acid (LA) metabolism"/>
</dbReference>
<dbReference type="Reactome" id="R-XTR-2046106">
    <property type="pathway name" value="alpha-linolenic acid (ALA) metabolism"/>
</dbReference>
<dbReference type="Reactome" id="R-XTR-75876">
    <property type="pathway name" value="Synthesis of very long-chain fatty acyl-CoAs"/>
</dbReference>
<dbReference type="UniPathway" id="UPA00658"/>
<dbReference type="Proteomes" id="UP000008143">
    <property type="component" value="Chromosome 5"/>
</dbReference>
<dbReference type="Bgee" id="ENSXETG00000015994">
    <property type="expression patterns" value="Expressed in testis and 13 other cell types or tissues"/>
</dbReference>
<dbReference type="GO" id="GO:0030425">
    <property type="term" value="C:dendrite"/>
    <property type="evidence" value="ECO:0007669"/>
    <property type="project" value="UniProtKB-SubCell"/>
</dbReference>
<dbReference type="GO" id="GO:0097447">
    <property type="term" value="C:dendritic tree"/>
    <property type="evidence" value="ECO:0000250"/>
    <property type="project" value="UniProtKB"/>
</dbReference>
<dbReference type="GO" id="GO:0005789">
    <property type="term" value="C:endoplasmic reticulum membrane"/>
    <property type="evidence" value="ECO:0007669"/>
    <property type="project" value="UniProtKB-SubCell"/>
</dbReference>
<dbReference type="GO" id="GO:0043025">
    <property type="term" value="C:neuronal cell body"/>
    <property type="evidence" value="ECO:0000250"/>
    <property type="project" value="UniProtKB"/>
</dbReference>
<dbReference type="GO" id="GO:0009922">
    <property type="term" value="F:fatty acid elongase activity"/>
    <property type="evidence" value="ECO:0000250"/>
    <property type="project" value="UniProtKB"/>
</dbReference>
<dbReference type="GO" id="GO:0034625">
    <property type="term" value="P:fatty acid elongation, monounsaturated fatty acid"/>
    <property type="evidence" value="ECO:0007669"/>
    <property type="project" value="UniProtKB-UniRule"/>
</dbReference>
<dbReference type="GO" id="GO:0034626">
    <property type="term" value="P:fatty acid elongation, polyunsaturated fatty acid"/>
    <property type="evidence" value="ECO:0007669"/>
    <property type="project" value="UniProtKB-UniRule"/>
</dbReference>
<dbReference type="GO" id="GO:0019367">
    <property type="term" value="P:fatty acid elongation, saturated fatty acid"/>
    <property type="evidence" value="ECO:0007669"/>
    <property type="project" value="InterPro"/>
</dbReference>
<dbReference type="GO" id="GO:0042759">
    <property type="term" value="P:long-chain fatty acid biosynthetic process"/>
    <property type="evidence" value="ECO:0007669"/>
    <property type="project" value="Ensembl"/>
</dbReference>
<dbReference type="GO" id="GO:0035338">
    <property type="term" value="P:long-chain fatty-acyl-CoA biosynthetic process"/>
    <property type="evidence" value="ECO:0007669"/>
    <property type="project" value="UniProtKB-UniRule"/>
</dbReference>
<dbReference type="GO" id="GO:0006636">
    <property type="term" value="P:unsaturated fatty acid biosynthetic process"/>
    <property type="evidence" value="ECO:0007669"/>
    <property type="project" value="UniProtKB-UniRule"/>
</dbReference>
<dbReference type="GO" id="GO:0042761">
    <property type="term" value="P:very long-chain fatty acid biosynthetic process"/>
    <property type="evidence" value="ECO:0000250"/>
    <property type="project" value="UniProtKB"/>
</dbReference>
<dbReference type="HAMAP" id="MF_03205">
    <property type="entry name" value="VLCF_elongase_5"/>
    <property type="match status" value="1"/>
</dbReference>
<dbReference type="InterPro" id="IPR002076">
    <property type="entry name" value="ELO_fam"/>
</dbReference>
<dbReference type="InterPro" id="IPR033677">
    <property type="entry name" value="ELOVL5"/>
</dbReference>
<dbReference type="PANTHER" id="PTHR11157:SF18">
    <property type="entry name" value="ELONGATION OF VERY LONG CHAIN FATTY ACIDS PROTEIN 5"/>
    <property type="match status" value="1"/>
</dbReference>
<dbReference type="PANTHER" id="PTHR11157">
    <property type="entry name" value="FATTY ACID ACYL TRANSFERASE-RELATED"/>
    <property type="match status" value="1"/>
</dbReference>
<dbReference type="Pfam" id="PF01151">
    <property type="entry name" value="ELO"/>
    <property type="match status" value="1"/>
</dbReference>
<proteinExistence type="evidence at transcript level"/>
<name>ELOV5_XENTR</name>
<protein>
    <recommendedName>
        <fullName evidence="3">Very long chain fatty acid elongase 5</fullName>
        <ecNumber evidence="2 3">2.3.1.199</ecNumber>
    </recommendedName>
    <alternativeName>
        <fullName evidence="3">3-keto acyl-CoA synthase elovl5</fullName>
    </alternativeName>
    <alternativeName>
        <fullName evidence="3">ELOVL fatty acid elongase 5</fullName>
        <shortName evidence="3">ELOVL FA elongase 5</shortName>
    </alternativeName>
    <alternativeName>
        <fullName evidence="3">Elongation of very long chain fatty acids protein 5</fullName>
    </alternativeName>
    <alternativeName>
        <fullName evidence="3">Very long chain 3-ketoacyl-CoA synthase 5</fullName>
    </alternativeName>
    <alternativeName>
        <fullName evidence="3">Very long chain 3-oxoacyl-CoA synthase 5</fullName>
    </alternativeName>
</protein>
<gene>
    <name evidence="3" type="primary">elovl5</name>
</gene>
<comment type="function">
    <text evidence="1 3">Catalyzes the first and rate-limiting reaction of the four reactions that constitute the long-chain fatty acids elongation cycle. This endoplasmic reticulum-bound enzymatic process allows the addition of 2 carbons to the chain of long- and very long-chain fatty acids (VLCFAs) per cycle. Condensing enzyme that acts specifically toward polyunsaturated acyl-CoA with the higher activity toward C18:3(n-6) acyl-CoA. May participate in the production of monounsaturated and of polyunsaturated VLCFAs of different chain lengths that are involved in multiple biological processes as precursors of membrane lipids and lipid mediators (By similarity). In conditions where the essential linoleic and alpha linoleic fatty acids are lacking it is also involved in the synthesis of Mead acid from oleic acid (By similarity).</text>
</comment>
<comment type="catalytic activity">
    <reaction evidence="3">
        <text>a very-long-chain acyl-CoA + malonyl-CoA + H(+) = a very-long-chain 3-oxoacyl-CoA + CO2 + CoA</text>
        <dbReference type="Rhea" id="RHEA:32727"/>
        <dbReference type="ChEBI" id="CHEBI:15378"/>
        <dbReference type="ChEBI" id="CHEBI:16526"/>
        <dbReference type="ChEBI" id="CHEBI:57287"/>
        <dbReference type="ChEBI" id="CHEBI:57384"/>
        <dbReference type="ChEBI" id="CHEBI:90725"/>
        <dbReference type="ChEBI" id="CHEBI:90736"/>
        <dbReference type="EC" id="2.3.1.199"/>
    </reaction>
    <physiologicalReaction direction="left-to-right" evidence="2">
        <dbReference type="Rhea" id="RHEA:32728"/>
    </physiologicalReaction>
</comment>
<comment type="catalytic activity">
    <reaction evidence="2">
        <text>(6Z,9Z,12Z)-octadecatrienoyl-CoA + malonyl-CoA + H(+) = (8Z,11Z,14Z)-3-oxoeicosatrienoyl-CoA + CO2 + CoA</text>
        <dbReference type="Rhea" id="RHEA:35379"/>
        <dbReference type="ChEBI" id="CHEBI:15378"/>
        <dbReference type="ChEBI" id="CHEBI:16526"/>
        <dbReference type="ChEBI" id="CHEBI:57287"/>
        <dbReference type="ChEBI" id="CHEBI:57363"/>
        <dbReference type="ChEBI" id="CHEBI:57384"/>
        <dbReference type="ChEBI" id="CHEBI:71481"/>
    </reaction>
    <physiologicalReaction direction="left-to-right" evidence="2">
        <dbReference type="Rhea" id="RHEA:35380"/>
    </physiologicalReaction>
</comment>
<comment type="catalytic activity">
    <reaction evidence="2">
        <text>(9Z,12Z,15Z)-octadecatrienoyl-CoA + malonyl-CoA + H(+) = (11Z,14Z,17Z)-3-oxoeicosatrienoyl-CoA + CO2 + CoA</text>
        <dbReference type="Rhea" id="RHEA:36523"/>
        <dbReference type="ChEBI" id="CHEBI:15378"/>
        <dbReference type="ChEBI" id="CHEBI:16526"/>
        <dbReference type="ChEBI" id="CHEBI:57287"/>
        <dbReference type="ChEBI" id="CHEBI:57384"/>
        <dbReference type="ChEBI" id="CHEBI:74034"/>
        <dbReference type="ChEBI" id="CHEBI:74054"/>
    </reaction>
    <physiologicalReaction direction="left-to-right" evidence="2">
        <dbReference type="Rhea" id="RHEA:36524"/>
    </physiologicalReaction>
</comment>
<comment type="catalytic activity">
    <reaction evidence="2">
        <text>(9Z)-hexadecenoyl-CoA + malonyl-CoA + H(+) = 3-oxo-(11Z)-octadecenoyl-CoA + CO2 + CoA</text>
        <dbReference type="Rhea" id="RHEA:39675"/>
        <dbReference type="ChEBI" id="CHEBI:15378"/>
        <dbReference type="ChEBI" id="CHEBI:16526"/>
        <dbReference type="ChEBI" id="CHEBI:57287"/>
        <dbReference type="ChEBI" id="CHEBI:57384"/>
        <dbReference type="ChEBI" id="CHEBI:61540"/>
        <dbReference type="ChEBI" id="CHEBI:76555"/>
    </reaction>
    <physiologicalReaction direction="left-to-right" evidence="2">
        <dbReference type="Rhea" id="RHEA:39676"/>
    </physiologicalReaction>
</comment>
<comment type="catalytic activity">
    <reaction evidence="2">
        <text>(9Z)-octadecenoyl-CoA + malonyl-CoA + H(+) = 3-oxo-(11Z)-eicosenoyl-CoA + CO2 + CoA</text>
        <dbReference type="Rhea" id="RHEA:36511"/>
        <dbReference type="ChEBI" id="CHEBI:15378"/>
        <dbReference type="ChEBI" id="CHEBI:16526"/>
        <dbReference type="ChEBI" id="CHEBI:57287"/>
        <dbReference type="ChEBI" id="CHEBI:57384"/>
        <dbReference type="ChEBI" id="CHEBI:57387"/>
        <dbReference type="ChEBI" id="CHEBI:74011"/>
    </reaction>
    <physiologicalReaction direction="left-to-right" evidence="2">
        <dbReference type="Rhea" id="RHEA:36512"/>
    </physiologicalReaction>
</comment>
<comment type="catalytic activity">
    <reaction evidence="2">
        <text>(11Z)-octadecenoyl-CoA + malonyl-CoA + H(+) = 3-oxo-(13Z)-eicosenoyl-CoA + CO2 + CoA</text>
        <dbReference type="Rhea" id="RHEA:39679"/>
        <dbReference type="ChEBI" id="CHEBI:15378"/>
        <dbReference type="ChEBI" id="CHEBI:16526"/>
        <dbReference type="ChEBI" id="CHEBI:57287"/>
        <dbReference type="ChEBI" id="CHEBI:57384"/>
        <dbReference type="ChEBI" id="CHEBI:75121"/>
        <dbReference type="ChEBI" id="CHEBI:76559"/>
    </reaction>
    <physiologicalReaction direction="left-to-right" evidence="2">
        <dbReference type="Rhea" id="RHEA:39680"/>
    </physiologicalReaction>
</comment>
<comment type="catalytic activity">
    <reaction evidence="2">
        <text>(9Z,12Z)-octadecadienoyl-CoA + malonyl-CoA + H(+) = (11Z,14Z)-3-oxoicosa-11,14-dienoyl-CoA + CO2 + CoA</text>
        <dbReference type="Rhea" id="RHEA:36503"/>
        <dbReference type="ChEBI" id="CHEBI:15378"/>
        <dbReference type="ChEBI" id="CHEBI:16526"/>
        <dbReference type="ChEBI" id="CHEBI:57287"/>
        <dbReference type="ChEBI" id="CHEBI:57383"/>
        <dbReference type="ChEBI" id="CHEBI:57384"/>
        <dbReference type="ChEBI" id="CHEBI:74012"/>
    </reaction>
    <physiologicalReaction direction="left-to-right" evidence="2">
        <dbReference type="Rhea" id="RHEA:36504"/>
    </physiologicalReaction>
</comment>
<comment type="catalytic activity">
    <reaction evidence="2">
        <text>(6Z,9Z,12Z,15Z)-octadecatetraenoyl-CoA + malonyl-CoA + H(+) = (8Z,11Z,14Z,17Z)-3-oxoicosatetraenoyl-CoA + CO2 + CoA</text>
        <dbReference type="Rhea" id="RHEA:35391"/>
        <dbReference type="ChEBI" id="CHEBI:15378"/>
        <dbReference type="ChEBI" id="CHEBI:16526"/>
        <dbReference type="ChEBI" id="CHEBI:57287"/>
        <dbReference type="ChEBI" id="CHEBI:57384"/>
        <dbReference type="ChEBI" id="CHEBI:71489"/>
        <dbReference type="ChEBI" id="CHEBI:71491"/>
    </reaction>
    <physiologicalReaction direction="left-to-right" evidence="2">
        <dbReference type="Rhea" id="RHEA:35392"/>
    </physiologicalReaction>
</comment>
<comment type="catalytic activity">
    <reaction evidence="2">
        <text>(5Z,8Z,11Z,14Z)-eicosatetraenoyl-CoA + malonyl-CoA + H(+) = (7Z,10Z,13Z,16Z)-3-oxodocosatetraenoyl-CoA + CO2 + CoA</text>
        <dbReference type="Rhea" id="RHEA:36475"/>
        <dbReference type="ChEBI" id="CHEBI:15378"/>
        <dbReference type="ChEBI" id="CHEBI:16526"/>
        <dbReference type="ChEBI" id="CHEBI:57287"/>
        <dbReference type="ChEBI" id="CHEBI:57368"/>
        <dbReference type="ChEBI" id="CHEBI:57384"/>
        <dbReference type="ChEBI" id="CHEBI:73852"/>
    </reaction>
    <physiologicalReaction direction="left-to-right" evidence="2">
        <dbReference type="Rhea" id="RHEA:36476"/>
    </physiologicalReaction>
</comment>
<comment type="catalytic activity">
    <reaction evidence="2">
        <text>(5Z,8Z,11Z,14Z,17Z)-eicosapentaenoyl-CoA + malonyl-CoA + H(+) = 3-oxo-(7Z,10Z,13Z,16Z,19Z)-docosapentaenoyl-CoA + CO2 + CoA</text>
        <dbReference type="Rhea" id="RHEA:36483"/>
        <dbReference type="ChEBI" id="CHEBI:15378"/>
        <dbReference type="ChEBI" id="CHEBI:16526"/>
        <dbReference type="ChEBI" id="CHEBI:57287"/>
        <dbReference type="ChEBI" id="CHEBI:57384"/>
        <dbReference type="ChEBI" id="CHEBI:73862"/>
        <dbReference type="ChEBI" id="CHEBI:73863"/>
    </reaction>
    <physiologicalReaction direction="left-to-right" evidence="2">
        <dbReference type="Rhea" id="RHEA:36484"/>
    </physiologicalReaction>
</comment>
<comment type="pathway">
    <text evidence="3">Lipid metabolism; polyunsaturated fatty acid biosynthesis.</text>
</comment>
<comment type="subcellular location">
    <subcellularLocation>
        <location evidence="3">Endoplasmic reticulum membrane</location>
        <topology evidence="3">Multi-pass membrane protein</topology>
    </subcellularLocation>
    <subcellularLocation>
        <location evidence="3">Cell projection</location>
        <location evidence="3">Dendrite</location>
    </subcellularLocation>
    <text evidence="3">In Purkinje cells, the protein localizes to the soma and proximal portion of the dendritic tree.</text>
</comment>
<comment type="similarity">
    <text evidence="3">Belongs to the ELO family. ELOVL5 subfamily.</text>
</comment>
<accession>Q5M8U1</accession>
<reference key="1">
    <citation type="submission" date="2004-12" db="EMBL/GenBank/DDBJ databases">
        <authorList>
            <consortium name="NIH - Xenopus Gene Collection (XGC) project"/>
        </authorList>
    </citation>
    <scope>NUCLEOTIDE SEQUENCE [LARGE SCALE MRNA]</scope>
</reference>
<sequence length="295" mass="34867">MEVLDKAVNGYIDHLLGPKDPRVRGWLLLDNYVPTILFTALYLFIVWRGPKYMQNRPPVSCRGILVVYNLGLTLLSLYMFYELVTGVWEGGYNFFCQDTNSGGDADTKIVRVLWWYYFSKLIEFMDTFFFILRKNNHQITVLHVYHHASMLNIWWFVMNWVPCGHSYFGATLNSFIHVLMYSYYGLSAIPAMRPYLWWKKYITQCQLTQFVLTMTQTTCAMIWPCKFPMGWLYFQNCYMISLIILFGNFYIKTYNKKTSSRRKEYQNGSASAVNGHTNSFSSLEDNVKQRKQRQD</sequence>